<keyword id="KW-0244">Early protein</keyword>
<keyword id="KW-1035">Host cytoplasm</keyword>
<keyword id="KW-1048">Host nucleus</keyword>
<keyword id="KW-0945">Host-virus interaction</keyword>
<keyword id="KW-1119">Modulation of host cell apoptosis by virus</keyword>
<keyword id="KW-0597">Phosphoprotein</keyword>
<keyword id="KW-1185">Reference proteome</keyword>
<evidence type="ECO:0000250" key="1">
    <source>
        <dbReference type="UniProtKB" id="P03243"/>
    </source>
</evidence>
<evidence type="ECO:0000250" key="2">
    <source>
        <dbReference type="UniProtKB" id="P03244"/>
    </source>
</evidence>
<evidence type="ECO:0000256" key="3">
    <source>
        <dbReference type="SAM" id="MobiDB-lite"/>
    </source>
</evidence>
<evidence type="ECO:0000305" key="4"/>
<organism>
    <name type="scientific">Human adenovirus F serotype 40</name>
    <name type="common">HAdV-40</name>
    <name type="synonym">Human adenovirus 40</name>
    <dbReference type="NCBI Taxonomy" id="28284"/>
    <lineage>
        <taxon>Viruses</taxon>
        <taxon>Varidnaviria</taxon>
        <taxon>Bamfordvirae</taxon>
        <taxon>Preplasmiviricota</taxon>
        <taxon>Tectiliviricetes</taxon>
        <taxon>Rowavirales</taxon>
        <taxon>Adenoviridae</taxon>
        <taxon>Mastadenovirus</taxon>
        <taxon>Human mastadenovirus F</taxon>
    </lineage>
</organism>
<sequence length="476" mass="52987">MERPNSSVAGLYSGLHGNGSVENLATEEEGLRLLAGAASARFGSSAGRGGGGGEPEGRPGPFNGIVTEPDPEEGTSSGQRGGINGQRGTKRKMENEGEDFLKELTLSLMSRRHHESVWWADLEDEFKNGEMNLLYKYTFEQLKTHWLEAWEDFELALNTFAKVALRPDTIYTIKKTVNIRKCAYVLGNGAVVRFQTCDRVAFNCAMQSLGPGLIGMSGVTFMNVRFVVEGFNGTVFASTTQLTLHGVFFQNCSGICVDSWGRVSARGCTFVACWKGVVGRNKSQMSVKKCVFERCIMAMVVEGQARIRHNAGSDNVCFLLLKGTASVKHNMICGGGHSQLLTCADGNCQALRVFHVVSHPRRPWPVFEHNMLMRCTVHLGARRGMFSPYQSNFCHTKVLMETDAFSRVWWNGVFDLTMELFKVVRYDESKVRCRPCECGANHIRLYPATLNVTEQLRTDHQMMSCLRTDYESSDED</sequence>
<feature type="chain" id="PRO_0000221728" description="E1B 55 kDa protein">
    <location>
        <begin position="1"/>
        <end position="476"/>
    </location>
</feature>
<feature type="region of interest" description="Disordered" evidence="3">
    <location>
        <begin position="1"/>
        <end position="20"/>
    </location>
</feature>
<feature type="region of interest" description="Disordered" evidence="3">
    <location>
        <begin position="42"/>
        <end position="95"/>
    </location>
</feature>
<feature type="modified residue" description="Phosphoserine" evidence="1">
    <location>
        <position position="472"/>
    </location>
</feature>
<feature type="modified residue" description="Phosphoserine" evidence="1">
    <location>
        <position position="473"/>
    </location>
</feature>
<feature type="sequence conflict" description="In Ref. 2; AAA42444." evidence="4" ref="2">
    <original>A</original>
    <variation>R</variation>
    <location>
        <position position="38"/>
    </location>
</feature>
<feature type="sequence conflict" description="In Ref. 2; AAA42444." evidence="4" ref="2">
    <location>
        <position position="53"/>
    </location>
</feature>
<feature type="sequence conflict" description="In Ref. 2; AAA42444." evidence="4" ref="2">
    <original>A</original>
    <variation>T</variation>
    <location>
        <position position="448"/>
    </location>
</feature>
<comment type="function">
    <text evidence="1">Plays a major role to prevent cellular inhibition of viral genome replication. Assembles an SCF-like E3 ubiquitin ligase complex based on the cellular proteins ELOB, ELOC, CUL5 and RBX1, in cooperation with viral E4orf6. This viral RING-type ligase ubiquitinates cellular substrates and targets them to proteasomal degradation: TP53/p53, LIG4, MRE11-RAD50-NBS1 (MRN) complex, ITGA3, DAXX and BLM. E1B-55K probably acts as the substrate-specific adapter of the SCF-like E3 ubiquitin ligase complex. Degradation of host TP53/p53 activity is essential for preventing E1A-induced TP53 accumulation that would otherwise lead to cell apoptosis and growth arrest. E1B-55K also inactivates TP53 transcription-factor activity by binding its transactivation domain. E1B-55K also functions as a SUMO1 E3 ligase for TP53 which causes the latter to be sequestered in promyelocytic leukemia (PML) nuclear bodies thereby contributing to maximal inhibition of TP53 function.</text>
</comment>
<comment type="subunit">
    <text evidence="1 2">Interacts with host PML-4 and PML-5; this interaction promotes efficient subnuclear targeting of E1B-55K to PML nuclear bodies. Interacts with E4-ORF3 protein (By similarity). Interacts with E4-ORF6 protein (By similarity).</text>
</comment>
<comment type="subcellular location">
    <subcellularLocation>
        <location evidence="1">Host nucleus</location>
    </subcellularLocation>
    <subcellularLocation>
        <location evidence="1">Host cytoplasm</location>
    </subcellularLocation>
    <text evidence="1">Colocalizes with host TP53 to host PML nuclear bodies. PML localization of E1B-55K is necessary for E1B-55K-dependent SUMOylation of TP53.</text>
</comment>
<comment type="domain">
    <text evidence="1">Contains a PML interaction motif that allows the subnuclear PML localization.</text>
</comment>
<comment type="similarity">
    <text evidence="4">Belongs to the adenoviridae E1B 55 kDa protein family.</text>
</comment>
<organismHost>
    <name type="scientific">Homo sapiens</name>
    <name type="common">Human</name>
    <dbReference type="NCBI Taxonomy" id="9606"/>
</organismHost>
<proteinExistence type="inferred from homology"/>
<name>E1B55_ADE40</name>
<reference key="1">
    <citation type="journal article" date="1987" name="Gene">
        <title>Structure and organization of the left-terminal DNA regions of fastidious adenovirus types 40 and 41.</title>
        <authorList>
            <person name="van Loon A.E."/>
            <person name="Ligtenberg M."/>
            <person name="Reemst A.M.C.B."/>
            <person name="Sussenbach J.S."/>
            <person name="Rozijn T.H."/>
        </authorList>
    </citation>
    <scope>NUCLEOTIDE SEQUENCE [GENOMIC DNA]</scope>
</reference>
<reference key="2">
    <citation type="journal article" date="1988" name="Virology">
        <title>Characterization of adenovirus type 40 E1 region.</title>
        <authorList>
            <person name="Ishino M."/>
            <person name="Ohashi Y."/>
            <person name="Emoto T."/>
            <person name="Sawada Y."/>
            <person name="Fujinaga K."/>
        </authorList>
    </citation>
    <scope>NUCLEOTIDE SEQUENCE [GENOMIC DNA]</scope>
</reference>
<accession>P10545</accession>
<protein>
    <recommendedName>
        <fullName>E1B 55 kDa protein</fullName>
        <shortName>E1B-55K</shortName>
    </recommendedName>
    <alternativeName>
        <fullName>E1B protein, large T-antigen</fullName>
    </alternativeName>
    <alternativeName>
        <fullName>E1B-495R</fullName>
    </alternativeName>
</protein>
<dbReference type="EMBL" id="M21276">
    <property type="protein sequence ID" value="AAA42444.1"/>
    <property type="molecule type" value="Genomic_DNA"/>
</dbReference>
<dbReference type="EMBL" id="M18288">
    <property type="protein sequence ID" value="AAA42449.1"/>
    <property type="molecule type" value="Genomic_RNA"/>
</dbReference>
<dbReference type="EMBL" id="L19443">
    <property type="protein sequence ID" value="AAC13958.1"/>
    <property type="molecule type" value="Genomic_DNA"/>
</dbReference>
<dbReference type="PIR" id="C29195">
    <property type="entry name" value="WMADP6"/>
</dbReference>
<dbReference type="RefSeq" id="NP_040850.1">
    <property type="nucleotide sequence ID" value="NC_001454.1"/>
</dbReference>
<dbReference type="SMR" id="P10545"/>
<dbReference type="GeneID" id="2715936"/>
<dbReference type="KEGG" id="vg:2715936"/>
<dbReference type="Proteomes" id="UP000151954">
    <property type="component" value="Segment"/>
</dbReference>
<dbReference type="GO" id="GO:0030430">
    <property type="term" value="C:host cell cytoplasm"/>
    <property type="evidence" value="ECO:0000250"/>
    <property type="project" value="UniProtKB"/>
</dbReference>
<dbReference type="GO" id="GO:0042025">
    <property type="term" value="C:host cell nucleus"/>
    <property type="evidence" value="ECO:0007669"/>
    <property type="project" value="UniProtKB-SubCell"/>
</dbReference>
<dbReference type="GO" id="GO:1990756">
    <property type="term" value="F:ubiquitin-like ligase-substrate adaptor activity"/>
    <property type="evidence" value="ECO:0000250"/>
    <property type="project" value="UniProtKB"/>
</dbReference>
<dbReference type="GO" id="GO:0052150">
    <property type="term" value="P:symbiont-mediated perturbation of host apoptosis"/>
    <property type="evidence" value="ECO:0007669"/>
    <property type="project" value="UniProtKB-KW"/>
</dbReference>
<dbReference type="GO" id="GO:0039648">
    <property type="term" value="P:symbiont-mediated perturbation of host ubiquitin-like protein modification"/>
    <property type="evidence" value="ECO:0000250"/>
    <property type="project" value="UniProtKB"/>
</dbReference>
<dbReference type="InterPro" id="IPR006717">
    <property type="entry name" value="Adeno_E1B_55K_N"/>
</dbReference>
<dbReference type="InterPro" id="IPR002612">
    <property type="entry name" value="Adeno_E1B_55kDa"/>
</dbReference>
<dbReference type="InterPro" id="IPR011050">
    <property type="entry name" value="Pectin_lyase_fold/virulence"/>
</dbReference>
<dbReference type="Pfam" id="PF01696">
    <property type="entry name" value="Adeno_E1B_55K"/>
    <property type="match status" value="1"/>
</dbReference>
<dbReference type="Pfam" id="PF04623">
    <property type="entry name" value="Adeno_E1B_55K_N"/>
    <property type="match status" value="1"/>
</dbReference>
<dbReference type="SUPFAM" id="SSF51126">
    <property type="entry name" value="Pectin lyase-like"/>
    <property type="match status" value="1"/>
</dbReference>